<gene>
    <name evidence="1" type="primary">rimM</name>
    <name type="ordered locus">Sde_1204</name>
</gene>
<evidence type="ECO:0000255" key="1">
    <source>
        <dbReference type="HAMAP-Rule" id="MF_00014"/>
    </source>
</evidence>
<keyword id="KW-0143">Chaperone</keyword>
<keyword id="KW-0963">Cytoplasm</keyword>
<keyword id="KW-1185">Reference proteome</keyword>
<keyword id="KW-0690">Ribosome biogenesis</keyword>
<keyword id="KW-0698">rRNA processing</keyword>
<proteinExistence type="inferred from homology"/>
<feature type="chain" id="PRO_0000244163" description="Ribosome maturation factor RimM">
    <location>
        <begin position="1"/>
        <end position="183"/>
    </location>
</feature>
<feature type="domain" description="PRC barrel" evidence="1">
    <location>
        <begin position="102"/>
        <end position="183"/>
    </location>
</feature>
<organism>
    <name type="scientific">Saccharophagus degradans (strain 2-40 / ATCC 43961 / DSM 17024)</name>
    <dbReference type="NCBI Taxonomy" id="203122"/>
    <lineage>
        <taxon>Bacteria</taxon>
        <taxon>Pseudomonadati</taxon>
        <taxon>Pseudomonadota</taxon>
        <taxon>Gammaproteobacteria</taxon>
        <taxon>Cellvibrionales</taxon>
        <taxon>Cellvibrionaceae</taxon>
        <taxon>Saccharophagus</taxon>
    </lineage>
</organism>
<reference key="1">
    <citation type="journal article" date="2008" name="PLoS Genet.">
        <title>Complete genome sequence of the complex carbohydrate-degrading marine bacterium, Saccharophagus degradans strain 2-40 T.</title>
        <authorList>
            <person name="Weiner R.M."/>
            <person name="Taylor L.E. II"/>
            <person name="Henrissat B."/>
            <person name="Hauser L."/>
            <person name="Land M."/>
            <person name="Coutinho P.M."/>
            <person name="Rancurel C."/>
            <person name="Saunders E.H."/>
            <person name="Longmire A.G."/>
            <person name="Zhang H."/>
            <person name="Bayer E.A."/>
            <person name="Gilbert H.J."/>
            <person name="Larimer F."/>
            <person name="Zhulin I.B."/>
            <person name="Ekborg N.A."/>
            <person name="Lamed R."/>
            <person name="Richardson P.M."/>
            <person name="Borovok I."/>
            <person name="Hutcheson S."/>
        </authorList>
    </citation>
    <scope>NUCLEOTIDE SEQUENCE [LARGE SCALE GENOMIC DNA]</scope>
    <source>
        <strain>2-40 / ATCC 43961 / DSM 17024</strain>
    </source>
</reference>
<sequence length="183" mass="20511">MFTPVEAKKSNLITVGRITGVFGIKGWVKLKSFTDPQDNVLEYSPLLLKTKHGVKECEIAEYQFRPQGLVVRLKGVDDRNAAEALAPVDVAIDKSLLPELDDDDFYWHQLEGLRVVTIYEGNTQDLGVVSKVMATGANDVLEVKPDAQSIDDRDRLVPYVLDLYVKKVDLSAECITVDWDPEF</sequence>
<name>RIMM_SACD2</name>
<protein>
    <recommendedName>
        <fullName evidence="1">Ribosome maturation factor RimM</fullName>
    </recommendedName>
</protein>
<dbReference type="EMBL" id="CP000282">
    <property type="protein sequence ID" value="ABD80466.1"/>
    <property type="molecule type" value="Genomic_DNA"/>
</dbReference>
<dbReference type="SMR" id="Q21LG3"/>
<dbReference type="STRING" id="203122.Sde_1204"/>
<dbReference type="KEGG" id="sde:Sde_1204"/>
<dbReference type="eggNOG" id="COG0806">
    <property type="taxonomic scope" value="Bacteria"/>
</dbReference>
<dbReference type="HOGENOM" id="CLU_077636_1_0_6"/>
<dbReference type="Proteomes" id="UP000001947">
    <property type="component" value="Chromosome"/>
</dbReference>
<dbReference type="GO" id="GO:0005737">
    <property type="term" value="C:cytoplasm"/>
    <property type="evidence" value="ECO:0007669"/>
    <property type="project" value="UniProtKB-SubCell"/>
</dbReference>
<dbReference type="GO" id="GO:0005840">
    <property type="term" value="C:ribosome"/>
    <property type="evidence" value="ECO:0007669"/>
    <property type="project" value="InterPro"/>
</dbReference>
<dbReference type="GO" id="GO:0043022">
    <property type="term" value="F:ribosome binding"/>
    <property type="evidence" value="ECO:0007669"/>
    <property type="project" value="InterPro"/>
</dbReference>
<dbReference type="GO" id="GO:0042274">
    <property type="term" value="P:ribosomal small subunit biogenesis"/>
    <property type="evidence" value="ECO:0007669"/>
    <property type="project" value="UniProtKB-UniRule"/>
</dbReference>
<dbReference type="GO" id="GO:0006364">
    <property type="term" value="P:rRNA processing"/>
    <property type="evidence" value="ECO:0007669"/>
    <property type="project" value="UniProtKB-UniRule"/>
</dbReference>
<dbReference type="Gene3D" id="2.30.30.240">
    <property type="entry name" value="PRC-barrel domain"/>
    <property type="match status" value="1"/>
</dbReference>
<dbReference type="Gene3D" id="2.40.30.60">
    <property type="entry name" value="RimM"/>
    <property type="match status" value="1"/>
</dbReference>
<dbReference type="HAMAP" id="MF_00014">
    <property type="entry name" value="Ribosome_mat_RimM"/>
    <property type="match status" value="1"/>
</dbReference>
<dbReference type="InterPro" id="IPR011033">
    <property type="entry name" value="PRC_barrel-like_sf"/>
</dbReference>
<dbReference type="InterPro" id="IPR056792">
    <property type="entry name" value="PRC_RimM"/>
</dbReference>
<dbReference type="InterPro" id="IPR011961">
    <property type="entry name" value="RimM"/>
</dbReference>
<dbReference type="InterPro" id="IPR002676">
    <property type="entry name" value="RimM_N"/>
</dbReference>
<dbReference type="InterPro" id="IPR036976">
    <property type="entry name" value="RimM_N_sf"/>
</dbReference>
<dbReference type="InterPro" id="IPR009000">
    <property type="entry name" value="Transl_B-barrel_sf"/>
</dbReference>
<dbReference type="NCBIfam" id="TIGR02273">
    <property type="entry name" value="16S_RimM"/>
    <property type="match status" value="1"/>
</dbReference>
<dbReference type="PANTHER" id="PTHR33692">
    <property type="entry name" value="RIBOSOME MATURATION FACTOR RIMM"/>
    <property type="match status" value="1"/>
</dbReference>
<dbReference type="PANTHER" id="PTHR33692:SF1">
    <property type="entry name" value="RIBOSOME MATURATION FACTOR RIMM"/>
    <property type="match status" value="1"/>
</dbReference>
<dbReference type="Pfam" id="PF24986">
    <property type="entry name" value="PRC_RimM"/>
    <property type="match status" value="1"/>
</dbReference>
<dbReference type="Pfam" id="PF01782">
    <property type="entry name" value="RimM"/>
    <property type="match status" value="1"/>
</dbReference>
<dbReference type="SUPFAM" id="SSF50346">
    <property type="entry name" value="PRC-barrel domain"/>
    <property type="match status" value="1"/>
</dbReference>
<dbReference type="SUPFAM" id="SSF50447">
    <property type="entry name" value="Translation proteins"/>
    <property type="match status" value="1"/>
</dbReference>
<comment type="function">
    <text evidence="1">An accessory protein needed during the final step in the assembly of 30S ribosomal subunit, possibly for assembly of the head region. Essential for efficient processing of 16S rRNA. May be needed both before and after RbfA during the maturation of 16S rRNA. It has affinity for free ribosomal 30S subunits but not for 70S ribosomes.</text>
</comment>
<comment type="subunit">
    <text evidence="1">Binds ribosomal protein uS19.</text>
</comment>
<comment type="subcellular location">
    <subcellularLocation>
        <location evidence="1">Cytoplasm</location>
    </subcellularLocation>
</comment>
<comment type="domain">
    <text evidence="1">The PRC barrel domain binds ribosomal protein uS19.</text>
</comment>
<comment type="similarity">
    <text evidence="1">Belongs to the RimM family.</text>
</comment>
<accession>Q21LG3</accession>